<gene>
    <name type="primary">CAPZA2</name>
</gene>
<protein>
    <recommendedName>
        <fullName>F-actin-capping protein subunit alpha-2</fullName>
    </recommendedName>
    <alternativeName>
        <fullName>CapZ alpha-2</fullName>
    </alternativeName>
</protein>
<sequence>MADLEEQLSDEEKVRIAAKFIIHAPPGEFNEVFNDVRLLLNNDNLLREGAAHAFAQYNLDQFTPVKIEGYEDQVLITEHGDLGNGKFLDPKNRICFKFDHLRKEATDPRPYEAENAIESWRSSVETALRAYVKEHYPNGVCTVYGKKIDGQQTIIACIESHQFQAKNFWNGRWRSEWKFTVTPSITQVVGILKIQVHYYEDGNVQLVSHKDIQDSLTVSNEAQTAKEFIKIVEAAENEYQTAISENYQTMSDTTFKALRRQLPVTRTKIDWNKILSYKIGKEMQNA</sequence>
<dbReference type="EMBL" id="DP000006">
    <property type="protein sequence ID" value="AAY89013.1"/>
    <property type="molecule type" value="Genomic_DNA"/>
</dbReference>
<dbReference type="RefSeq" id="NP_001164492.1">
    <property type="nucleotide sequence ID" value="NM_001171021.1"/>
</dbReference>
<dbReference type="SMR" id="Q09YN4"/>
<dbReference type="FunCoup" id="Q09YN4">
    <property type="interactions" value="1592"/>
</dbReference>
<dbReference type="PaxDb" id="9986-ENSOCUP00000003111"/>
<dbReference type="GeneID" id="100126568"/>
<dbReference type="KEGG" id="ocu:100126568"/>
<dbReference type="CTD" id="830"/>
<dbReference type="eggNOG" id="KOG0836">
    <property type="taxonomic scope" value="Eukaryota"/>
</dbReference>
<dbReference type="HOGENOM" id="CLU_045161_0_0_1"/>
<dbReference type="InParanoid" id="Q09YN4"/>
<dbReference type="OMA" id="VACIEDH"/>
<dbReference type="OrthoDB" id="340550at2759"/>
<dbReference type="TreeFam" id="TF314822"/>
<dbReference type="Proteomes" id="UP000001811">
    <property type="component" value="Unplaced"/>
</dbReference>
<dbReference type="ExpressionAtlas" id="Q09YN4">
    <property type="expression patterns" value="baseline"/>
</dbReference>
<dbReference type="GO" id="GO:0030863">
    <property type="term" value="C:cortical cytoskeleton"/>
    <property type="evidence" value="ECO:0007669"/>
    <property type="project" value="TreeGrafter"/>
</dbReference>
<dbReference type="GO" id="GO:0008290">
    <property type="term" value="C:F-actin capping protein complex"/>
    <property type="evidence" value="ECO:0007669"/>
    <property type="project" value="InterPro"/>
</dbReference>
<dbReference type="GO" id="GO:0051015">
    <property type="term" value="F:actin filament binding"/>
    <property type="evidence" value="ECO:0007669"/>
    <property type="project" value="TreeGrafter"/>
</dbReference>
<dbReference type="GO" id="GO:0030036">
    <property type="term" value="P:actin cytoskeleton organization"/>
    <property type="evidence" value="ECO:0007669"/>
    <property type="project" value="TreeGrafter"/>
</dbReference>
<dbReference type="GO" id="GO:0051016">
    <property type="term" value="P:barbed-end actin filament capping"/>
    <property type="evidence" value="ECO:0007669"/>
    <property type="project" value="InterPro"/>
</dbReference>
<dbReference type="FunFam" id="3.30.1140.60:FF:000001">
    <property type="entry name" value="F-actin-capping protein subunit alpha"/>
    <property type="match status" value="1"/>
</dbReference>
<dbReference type="FunFam" id="3.90.1150.210:FF:000002">
    <property type="entry name" value="F-actin-capping protein subunit alpha"/>
    <property type="match status" value="1"/>
</dbReference>
<dbReference type="Gene3D" id="3.30.1140.60">
    <property type="entry name" value="F-actin capping protein, alpha subunit"/>
    <property type="match status" value="1"/>
</dbReference>
<dbReference type="Gene3D" id="3.90.1150.210">
    <property type="entry name" value="F-actin capping protein, beta subunit"/>
    <property type="match status" value="1"/>
</dbReference>
<dbReference type="InterPro" id="IPR002189">
    <property type="entry name" value="CapZ_alpha"/>
</dbReference>
<dbReference type="InterPro" id="IPR037282">
    <property type="entry name" value="CapZ_alpha/beta"/>
</dbReference>
<dbReference type="InterPro" id="IPR042276">
    <property type="entry name" value="CapZ_alpha/beta_2"/>
</dbReference>
<dbReference type="InterPro" id="IPR042489">
    <property type="entry name" value="CapZ_alpha_1"/>
</dbReference>
<dbReference type="InterPro" id="IPR017865">
    <property type="entry name" value="F-actin_cap_asu_CS"/>
</dbReference>
<dbReference type="PANTHER" id="PTHR10653">
    <property type="entry name" value="F-ACTIN-CAPPING PROTEIN SUBUNIT ALPHA"/>
    <property type="match status" value="1"/>
</dbReference>
<dbReference type="PANTHER" id="PTHR10653:SF2">
    <property type="entry name" value="F-ACTIN-CAPPING PROTEIN SUBUNIT ALPHA-2"/>
    <property type="match status" value="1"/>
</dbReference>
<dbReference type="Pfam" id="PF01267">
    <property type="entry name" value="F-actin_cap_A"/>
    <property type="match status" value="1"/>
</dbReference>
<dbReference type="PRINTS" id="PR00191">
    <property type="entry name" value="FACTINCAPA"/>
</dbReference>
<dbReference type="SUPFAM" id="SSF90096">
    <property type="entry name" value="Subunits of heterodimeric actin filament capping protein Capz"/>
    <property type="match status" value="1"/>
</dbReference>
<dbReference type="PROSITE" id="PS00748">
    <property type="entry name" value="F_ACTIN_CAPPING_A_1"/>
    <property type="match status" value="1"/>
</dbReference>
<dbReference type="PROSITE" id="PS00749">
    <property type="entry name" value="F_ACTIN_CAPPING_A_2"/>
    <property type="match status" value="1"/>
</dbReference>
<reference key="1">
    <citation type="submission" date="2006-09" db="EMBL/GenBank/DDBJ databases">
        <title>NISC comparative sequencing initiative.</title>
        <authorList>
            <person name="Antonellis A."/>
            <person name="Ayele K."/>
            <person name="Benjamin B."/>
            <person name="Blakesley R.W."/>
            <person name="Boakye A."/>
            <person name="Bouffard G.G."/>
            <person name="Brinkley C."/>
            <person name="Brooks S."/>
            <person name="Chu G."/>
            <person name="Coleman H."/>
            <person name="Engle J."/>
            <person name="Gestole M."/>
            <person name="Greene A."/>
            <person name="Guan X."/>
            <person name="Gupta J."/>
            <person name="Haghighi P."/>
            <person name="Han J."/>
            <person name="Hansen N."/>
            <person name="Ho S.-L."/>
            <person name="Hu P."/>
            <person name="Hunter G."/>
            <person name="Hurle B."/>
            <person name="Idol J.R."/>
            <person name="Kwong P."/>
            <person name="Laric P."/>
            <person name="Larson S."/>
            <person name="Lee-Lin S.-Q."/>
            <person name="Legaspi R."/>
            <person name="Madden M."/>
            <person name="Maduro Q.L."/>
            <person name="Maduro V.B."/>
            <person name="Margulies E.H."/>
            <person name="Masiello C."/>
            <person name="Maskeri B."/>
            <person name="McDowell J."/>
            <person name="Mojidi H.A."/>
            <person name="Mullikin J.C."/>
            <person name="Oestreicher J.S."/>
            <person name="Park M."/>
            <person name="Portnoy M.E."/>
            <person name="Prasad A."/>
            <person name="Puri O."/>
            <person name="Reddix-Dugue N."/>
            <person name="Schandler K."/>
            <person name="Schueler M.G."/>
            <person name="Sison C."/>
            <person name="Stantripop S."/>
            <person name="Stephen E."/>
            <person name="Taye A."/>
            <person name="Thomas J.W."/>
            <person name="Thomas P.J."/>
            <person name="Tsipouri V."/>
            <person name="Ung L."/>
            <person name="Vogt J.L."/>
            <person name="Wetherby K.D."/>
            <person name="Young A."/>
            <person name="Green E.D."/>
        </authorList>
    </citation>
    <scope>NUCLEOTIDE SEQUENCE [LARGE SCALE GENOMIC DNA]</scope>
</reference>
<comment type="function">
    <text evidence="1">F-actin-capping proteins bind in a Ca(2+)-independent manner to the fast growing ends of actin filaments (barbed end) thereby blocking the exchange of subunits at these ends. Unlike other capping proteins (such as gelsolin and severin), these proteins do not sever actin filaments (By similarity).</text>
</comment>
<comment type="subunit">
    <text evidence="1">Component of the F-actin capping complex, composed of a heterodimer of an alpha and a beta subunit. Component of the WASH complex, composed of F-actin-capping protein subunit alpha (CAPZA1, CAPZA2 or CAPZA3), F-actin-capping protein subunit beta (CAPZB), WASHC1, WASHC2, WASHC3, WASHC4 and WASHC5. Interacts with RCSD1/CAPZIP (By similarity).</text>
</comment>
<comment type="similarity">
    <text evidence="3">Belongs to the F-actin-capping protein alpha subunit family.</text>
</comment>
<proteinExistence type="inferred from homology"/>
<organism>
    <name type="scientific">Oryctolagus cuniculus</name>
    <name type="common">Rabbit</name>
    <dbReference type="NCBI Taxonomy" id="9986"/>
    <lineage>
        <taxon>Eukaryota</taxon>
        <taxon>Metazoa</taxon>
        <taxon>Chordata</taxon>
        <taxon>Craniata</taxon>
        <taxon>Vertebrata</taxon>
        <taxon>Euteleostomi</taxon>
        <taxon>Mammalia</taxon>
        <taxon>Eutheria</taxon>
        <taxon>Euarchontoglires</taxon>
        <taxon>Glires</taxon>
        <taxon>Lagomorpha</taxon>
        <taxon>Leporidae</taxon>
        <taxon>Oryctolagus</taxon>
    </lineage>
</organism>
<name>CAZA2_RABIT</name>
<keyword id="KW-0007">Acetylation</keyword>
<keyword id="KW-0117">Actin capping</keyword>
<keyword id="KW-0009">Actin-binding</keyword>
<keyword id="KW-0597">Phosphoprotein</keyword>
<keyword id="KW-1185">Reference proteome</keyword>
<accession>Q09YN4</accession>
<evidence type="ECO:0000250" key="1"/>
<evidence type="ECO:0000250" key="2">
    <source>
        <dbReference type="UniProtKB" id="P47755"/>
    </source>
</evidence>
<evidence type="ECO:0000305" key="3"/>
<feature type="initiator methionine" description="Removed" evidence="2">
    <location>
        <position position="1"/>
    </location>
</feature>
<feature type="chain" id="PRO_0000260361" description="F-actin-capping protein subunit alpha-2">
    <location>
        <begin position="2"/>
        <end position="286"/>
    </location>
</feature>
<feature type="modified residue" description="N-acetylalanine" evidence="2">
    <location>
        <position position="2"/>
    </location>
</feature>
<feature type="modified residue" description="Phosphoserine" evidence="2">
    <location>
        <position position="9"/>
    </location>
</feature>